<gene>
    <name type="primary">astA</name>
    <name type="synonym">aruF</name>
    <name type="ordered locus">PA0896</name>
</gene>
<feature type="chain" id="PRO_0000064714" description="Arginine N-succinyltransferase subunit alpha">
    <location>
        <begin position="1"/>
        <end position="338"/>
    </location>
</feature>
<feature type="strand" evidence="2">
    <location>
        <begin position="2"/>
        <end position="6"/>
    </location>
</feature>
<feature type="helix" evidence="2">
    <location>
        <begin position="9"/>
        <end position="11"/>
    </location>
</feature>
<feature type="helix" evidence="2">
    <location>
        <begin position="12"/>
        <end position="21"/>
    </location>
</feature>
<feature type="helix" evidence="2">
    <location>
        <begin position="33"/>
        <end position="48"/>
    </location>
</feature>
<feature type="strand" evidence="2">
    <location>
        <begin position="58"/>
        <end position="65"/>
    </location>
</feature>
<feature type="turn" evidence="2">
    <location>
        <begin position="66"/>
        <end position="68"/>
    </location>
</feature>
<feature type="strand" evidence="2">
    <location>
        <begin position="71"/>
        <end position="80"/>
    </location>
</feature>
<feature type="strand" evidence="2">
    <location>
        <begin position="83"/>
        <end position="85"/>
    </location>
</feature>
<feature type="strand" evidence="2">
    <location>
        <begin position="89"/>
        <end position="99"/>
    </location>
</feature>
<feature type="turn" evidence="2">
    <location>
        <begin position="100"/>
        <end position="103"/>
    </location>
</feature>
<feature type="strand" evidence="2">
    <location>
        <begin position="104"/>
        <end position="114"/>
    </location>
</feature>
<feature type="turn" evidence="2">
    <location>
        <begin position="116"/>
        <end position="119"/>
    </location>
</feature>
<feature type="strand" evidence="2">
    <location>
        <begin position="120"/>
        <end position="128"/>
    </location>
</feature>
<feature type="helix" evidence="2">
    <location>
        <begin position="130"/>
        <end position="132"/>
    </location>
</feature>
<feature type="helix" evidence="2">
    <location>
        <begin position="136"/>
        <end position="151"/>
    </location>
</feature>
<feature type="helix" evidence="2">
    <location>
        <begin position="153"/>
        <end position="155"/>
    </location>
</feature>
<feature type="strand" evidence="2">
    <location>
        <begin position="158"/>
        <end position="163"/>
    </location>
</feature>
<feature type="helix" evidence="2">
    <location>
        <begin position="175"/>
        <end position="179"/>
    </location>
</feature>
<feature type="helix" evidence="2">
    <location>
        <begin position="181"/>
        <end position="183"/>
    </location>
</feature>
<feature type="helix" evidence="2">
    <location>
        <begin position="189"/>
        <end position="198"/>
    </location>
</feature>
<feature type="helix" evidence="2">
    <location>
        <begin position="215"/>
        <end position="217"/>
    </location>
</feature>
<feature type="helix" evidence="2">
    <location>
        <begin position="220"/>
        <end position="225"/>
    </location>
</feature>
<feature type="helix" evidence="2">
    <location>
        <begin position="231"/>
        <end position="233"/>
    </location>
</feature>
<feature type="helix" evidence="2">
    <location>
        <begin position="234"/>
        <end position="243"/>
    </location>
</feature>
<feature type="strand" evidence="2">
    <location>
        <begin position="246"/>
        <end position="251"/>
    </location>
</feature>
<feature type="turn" evidence="2">
    <location>
        <begin position="253"/>
        <end position="255"/>
    </location>
</feature>
<feature type="strand" evidence="2">
    <location>
        <begin position="258"/>
        <end position="263"/>
    </location>
</feature>
<feature type="helix" evidence="2">
    <location>
        <begin position="264"/>
        <end position="266"/>
    </location>
</feature>
<feature type="helix" evidence="2">
    <location>
        <begin position="268"/>
        <end position="271"/>
    </location>
</feature>
<feature type="strand" evidence="2">
    <location>
        <begin position="274"/>
        <end position="280"/>
    </location>
</feature>
<feature type="strand" evidence="2">
    <location>
        <begin position="288"/>
        <end position="293"/>
    </location>
</feature>
<feature type="strand" evidence="2">
    <location>
        <begin position="302"/>
        <end position="307"/>
    </location>
</feature>
<feature type="strand" evidence="2">
    <location>
        <begin position="315"/>
        <end position="317"/>
    </location>
</feature>
<feature type="helix" evidence="2">
    <location>
        <begin position="319"/>
        <end position="325"/>
    </location>
</feature>
<feature type="strand" evidence="2">
    <location>
        <begin position="332"/>
        <end position="337"/>
    </location>
</feature>
<keyword id="KW-0002">3D-structure</keyword>
<keyword id="KW-0012">Acyltransferase</keyword>
<keyword id="KW-0056">Arginine metabolism</keyword>
<keyword id="KW-0903">Direct protein sequencing</keyword>
<keyword id="KW-1185">Reference proteome</keyword>
<keyword id="KW-0808">Transferase</keyword>
<reference key="1">
    <citation type="journal article" date="1997" name="J. Bacteriol.">
        <title>Cloning and characterization of the aru genes encoding enzymes of the catabolic arginine succinyltransferase pathway in Pseudomonas aeruginosa.</title>
        <authorList>
            <person name="Itoh Y."/>
        </authorList>
    </citation>
    <scope>NUCLEOTIDE SEQUENCE [GENOMIC DNA]</scope>
    <source>
        <strain>ATCC 15692 / DSM 22644 / CIP 104116 / JCM 14847 / LMG 12228 / 1C / PRS 101 / PAO1</strain>
    </source>
</reference>
<reference key="2">
    <citation type="journal article" date="2000" name="Nature">
        <title>Complete genome sequence of Pseudomonas aeruginosa PAO1, an opportunistic pathogen.</title>
        <authorList>
            <person name="Stover C.K."/>
            <person name="Pham X.-Q.T."/>
            <person name="Erwin A.L."/>
            <person name="Mizoguchi S.D."/>
            <person name="Warrener P."/>
            <person name="Hickey M.J."/>
            <person name="Brinkman F.S.L."/>
            <person name="Hufnagle W.O."/>
            <person name="Kowalik D.J."/>
            <person name="Lagrou M."/>
            <person name="Garber R.L."/>
            <person name="Goltry L."/>
            <person name="Tolentino E."/>
            <person name="Westbrock-Wadman S."/>
            <person name="Yuan Y."/>
            <person name="Brody L.L."/>
            <person name="Coulter S.N."/>
            <person name="Folger K.R."/>
            <person name="Kas A."/>
            <person name="Larbig K."/>
            <person name="Lim R.M."/>
            <person name="Smith K.A."/>
            <person name="Spencer D.H."/>
            <person name="Wong G.K.-S."/>
            <person name="Wu Z."/>
            <person name="Paulsen I.T."/>
            <person name="Reizer J."/>
            <person name="Saier M.H. Jr."/>
            <person name="Hancock R.E.W."/>
            <person name="Lory S."/>
            <person name="Olson M.V."/>
        </authorList>
    </citation>
    <scope>NUCLEOTIDE SEQUENCE [LARGE SCALE GENOMIC DNA]</scope>
    <source>
        <strain>ATCC 15692 / DSM 22644 / CIP 104116 / JCM 14847 / LMG 12228 / 1C / PRS 101 / PAO1</strain>
    </source>
</reference>
<reference key="3">
    <citation type="journal article" date="1994" name="Eur. J. Biochem.">
        <title>Purification and properties of a succinyltransferase from Pseudomonas aeruginosa specific for both arginine and ornithine.</title>
        <authorList>
            <person name="Tricot C."/>
            <person name="Vander Wauven C."/>
            <person name="Wattiez R."/>
            <person name="Falmagne P."/>
            <person name="Stalon V."/>
        </authorList>
    </citation>
    <scope>PROTEIN SEQUENCE OF 1-11</scope>
    <source>
        <strain>ATCC 15692 / DSM 22644 / CIP 104116 / JCM 14847 / LMG 12228 / 1C / PRS 101 / PAO1</strain>
    </source>
</reference>
<name>ASTA_PSEAE</name>
<sequence length="338" mass="36931">MLVMRPAQAADLPQVQRLAADSPVGVTSLPDDAERLRDKILASEASFAAEVSYNGEESYFFVLEDSASGELVGCSAIVASAGFSEPFYSFRNETFVHASRSLSIHNKIHVLSLCHDLTGNSLLTSFYVQRDLVQSVYAELNSRGRLLFMASHPERFADAVVVEIVGYSDEQGESPFWNAVGRNFFDLNYIEAEKLSGLKSRTFLAELMPHYPIYVPLLPDAAQESMGQVHPRAQITFDILMREGFETDNYIDIFDGGPTLHARTSGIRSIAQSRVVPVKIGEAPKSGRPYLVTNGQLQDFRAVVLDLDWAPGKPVALSVEAAEALGVGEGASVRLVAV</sequence>
<proteinExistence type="evidence at protein level"/>
<protein>
    <recommendedName>
        <fullName>Arginine N-succinyltransferase subunit alpha</fullName>
        <shortName>ARUAI</shortName>
        <ecNumber>2.3.1.109</ecNumber>
    </recommendedName>
    <alternativeName>
        <fullName>AOST</fullName>
        <shortName>AST</shortName>
    </alternativeName>
</protein>
<comment type="function">
    <text>Catalyzes the transfer of succinyl-CoA to arginine to produce N(2)-succinylarginine. Also acts on L-ornithine.</text>
</comment>
<comment type="catalytic activity">
    <reaction>
        <text>succinyl-CoA + L-arginine = N(2)-succinyl-L-arginine + CoA + H(+)</text>
        <dbReference type="Rhea" id="RHEA:15185"/>
        <dbReference type="ChEBI" id="CHEBI:15378"/>
        <dbReference type="ChEBI" id="CHEBI:32682"/>
        <dbReference type="ChEBI" id="CHEBI:57287"/>
        <dbReference type="ChEBI" id="CHEBI:57292"/>
        <dbReference type="ChEBI" id="CHEBI:58241"/>
        <dbReference type="EC" id="2.3.1.109"/>
    </reaction>
</comment>
<comment type="pathway">
    <text>Amino-acid degradation; L-arginine degradation via AST pathway; L-glutamate and succinate from L-arginine: step 1/5.</text>
</comment>
<comment type="subunit">
    <text>Heterotetramer of two alpha and two beta subunits.</text>
</comment>
<comment type="similarity">
    <text evidence="1">Belongs to the succinylarginine dihydrolase family.</text>
</comment>
<evidence type="ECO:0000305" key="1"/>
<evidence type="ECO:0007829" key="2">
    <source>
        <dbReference type="PDB" id="1YLE"/>
    </source>
</evidence>
<organism>
    <name type="scientific">Pseudomonas aeruginosa (strain ATCC 15692 / DSM 22644 / CIP 104116 / JCM 14847 / LMG 12228 / 1C / PRS 101 / PAO1)</name>
    <dbReference type="NCBI Taxonomy" id="208964"/>
    <lineage>
        <taxon>Bacteria</taxon>
        <taxon>Pseudomonadati</taxon>
        <taxon>Pseudomonadota</taxon>
        <taxon>Gammaproteobacteria</taxon>
        <taxon>Pseudomonadales</taxon>
        <taxon>Pseudomonadaceae</taxon>
        <taxon>Pseudomonas</taxon>
    </lineage>
</organism>
<accession>P80357</accession>
<dbReference type="EC" id="2.3.1.109"/>
<dbReference type="EMBL" id="AF011922">
    <property type="protein sequence ID" value="AAC46010.1"/>
    <property type="molecule type" value="Genomic_DNA"/>
</dbReference>
<dbReference type="EMBL" id="AE004091">
    <property type="protein sequence ID" value="AAG04285.1"/>
    <property type="molecule type" value="Genomic_DNA"/>
</dbReference>
<dbReference type="PIR" id="A83533">
    <property type="entry name" value="A83533"/>
</dbReference>
<dbReference type="RefSeq" id="NP_249587.1">
    <property type="nucleotide sequence ID" value="NC_002516.2"/>
</dbReference>
<dbReference type="RefSeq" id="WP_003085950.1">
    <property type="nucleotide sequence ID" value="NZ_QZGE01000007.1"/>
</dbReference>
<dbReference type="PDB" id="1YLE">
    <property type="method" value="X-ray"/>
    <property type="resolution" value="1.70 A"/>
    <property type="chains" value="A=1-338"/>
</dbReference>
<dbReference type="PDBsum" id="1YLE"/>
<dbReference type="SMR" id="P80357"/>
<dbReference type="STRING" id="208964.PA0896"/>
<dbReference type="DrugBank" id="DB01942">
    <property type="generic name" value="Formic acid"/>
</dbReference>
<dbReference type="PaxDb" id="208964-PA0896"/>
<dbReference type="DNASU" id="879437"/>
<dbReference type="GeneID" id="77222538"/>
<dbReference type="GeneID" id="879437"/>
<dbReference type="KEGG" id="pae:PA0896"/>
<dbReference type="PATRIC" id="fig|208964.12.peg.931"/>
<dbReference type="PseudoCAP" id="PA0896"/>
<dbReference type="HOGENOM" id="CLU_057655_0_0_6"/>
<dbReference type="InParanoid" id="P80357"/>
<dbReference type="OrthoDB" id="21121at2"/>
<dbReference type="PhylomeDB" id="P80357"/>
<dbReference type="BioCyc" id="MetaCyc:MONOMER-11524"/>
<dbReference type="BioCyc" id="PAER208964:G1FZ6-912-MONOMER"/>
<dbReference type="UniPathway" id="UPA00185">
    <property type="reaction ID" value="UER00279"/>
</dbReference>
<dbReference type="EvolutionaryTrace" id="P80357"/>
<dbReference type="Proteomes" id="UP000002438">
    <property type="component" value="Chromosome"/>
</dbReference>
<dbReference type="GO" id="GO:0008791">
    <property type="term" value="F:arginine N-succinyltransferase activity"/>
    <property type="evidence" value="ECO:0007669"/>
    <property type="project" value="UniProtKB-EC"/>
</dbReference>
<dbReference type="GO" id="GO:0009015">
    <property type="term" value="F:N-succinylarginine dihydrolase activity"/>
    <property type="evidence" value="ECO:0000318"/>
    <property type="project" value="GO_Central"/>
</dbReference>
<dbReference type="GO" id="GO:0006527">
    <property type="term" value="P:arginine catabolic process"/>
    <property type="evidence" value="ECO:0000314"/>
    <property type="project" value="PseudoCAP"/>
</dbReference>
<dbReference type="GO" id="GO:0019545">
    <property type="term" value="P:arginine catabolic process to succinate"/>
    <property type="evidence" value="ECO:0007669"/>
    <property type="project" value="UniProtKB-UniPathway"/>
</dbReference>
<dbReference type="Gene3D" id="2.40.40.20">
    <property type="match status" value="1"/>
</dbReference>
<dbReference type="InterPro" id="IPR016181">
    <property type="entry name" value="Acyl_CoA_acyltransferase"/>
</dbReference>
<dbReference type="InterPro" id="IPR017651">
    <property type="entry name" value="Arg/Orn_succinylTfrase_asu"/>
</dbReference>
<dbReference type="InterPro" id="IPR007041">
    <property type="entry name" value="Arg_succinylTrfase_AstA/AruG"/>
</dbReference>
<dbReference type="NCBIfam" id="TIGR03245">
    <property type="entry name" value="arg_AOST_alph"/>
    <property type="match status" value="1"/>
</dbReference>
<dbReference type="NCBIfam" id="TIGR03243">
    <property type="entry name" value="arg_catab_AOST"/>
    <property type="match status" value="1"/>
</dbReference>
<dbReference type="PANTHER" id="PTHR30420:SF1">
    <property type="entry name" value="ARGININE N-SUCCINYLTRANSFERASE"/>
    <property type="match status" value="1"/>
</dbReference>
<dbReference type="PANTHER" id="PTHR30420">
    <property type="entry name" value="N-SUCCINYLARGININE DIHYDROLASE"/>
    <property type="match status" value="1"/>
</dbReference>
<dbReference type="Pfam" id="PF04958">
    <property type="entry name" value="AstA"/>
    <property type="match status" value="1"/>
</dbReference>
<dbReference type="SUPFAM" id="SSF55729">
    <property type="entry name" value="Acyl-CoA N-acyltransferases (Nat)"/>
    <property type="match status" value="1"/>
</dbReference>